<sequence>MSDISCKKRDDYLEWPEYFMAVAFLSAQRSKDPSSQVGACIVNTENKIVGIGYNGMPNGCSDDLLPWRRTAENKLDTKYPYVCHAELNAIMNKNSADVKGCSMYVALFPCNECAKLIIQAGIKEVIFMSDKYHDSEETTAARLLFKLAGVTFRKFTPKYSKIVIDFDSINSRPSQKPQ</sequence>
<accession>Q8K2D6</accession>
<accession>Q8BP55</accession>
<name>DCTD_MOUSE</name>
<feature type="chain" id="PRO_0000171692" description="Deoxycytidylate deaminase">
    <location>
        <begin position="1"/>
        <end position="178"/>
    </location>
</feature>
<feature type="domain" description="CMP/dCMP-type deaminase" evidence="2">
    <location>
        <begin position="14"/>
        <end position="145"/>
    </location>
</feature>
<feature type="active site" description="Proton donor" evidence="2">
    <location>
        <position position="86"/>
    </location>
</feature>
<feature type="binding site" evidence="1">
    <location>
        <position position="84"/>
    </location>
    <ligand>
        <name>Zn(2+)</name>
        <dbReference type="ChEBI" id="CHEBI:29105"/>
        <note>catalytic</note>
    </ligand>
</feature>
<feature type="binding site" evidence="1">
    <location>
        <position position="110"/>
    </location>
    <ligand>
        <name>Zn(2+)</name>
        <dbReference type="ChEBI" id="CHEBI:29105"/>
        <note>catalytic</note>
    </ligand>
</feature>
<feature type="binding site" evidence="1">
    <location>
        <position position="113"/>
    </location>
    <ligand>
        <name>Zn(2+)</name>
        <dbReference type="ChEBI" id="CHEBI:29105"/>
        <note>catalytic</note>
    </ligand>
</feature>
<feature type="modified residue" description="Phosphoserine" evidence="1">
    <location>
        <position position="174"/>
    </location>
</feature>
<feature type="sequence conflict" description="In Ref. 1; BAC36937." evidence="3" ref="1">
    <original>S</original>
    <variation>F</variation>
    <location>
        <position position="35"/>
    </location>
</feature>
<dbReference type="EC" id="3.5.4.12" evidence="1"/>
<dbReference type="EMBL" id="AK031645">
    <property type="protein sequence ID" value="BAC27492.1"/>
    <property type="molecule type" value="mRNA"/>
</dbReference>
<dbReference type="EMBL" id="AK039066">
    <property type="protein sequence ID" value="BAC30229.1"/>
    <property type="molecule type" value="mRNA"/>
</dbReference>
<dbReference type="EMBL" id="AK077663">
    <property type="protein sequence ID" value="BAC36937.1"/>
    <property type="molecule type" value="mRNA"/>
</dbReference>
<dbReference type="EMBL" id="BC031719">
    <property type="protein sequence ID" value="AAH31719.1"/>
    <property type="molecule type" value="mRNA"/>
</dbReference>
<dbReference type="CCDS" id="CCDS22302.2"/>
<dbReference type="RefSeq" id="NP_001154987.2">
    <property type="nucleotide sequence ID" value="NM_001161515.2"/>
</dbReference>
<dbReference type="RefSeq" id="NP_001154988.2">
    <property type="nucleotide sequence ID" value="NM_001161516.2"/>
</dbReference>
<dbReference type="RefSeq" id="NP_848903.3">
    <property type="nucleotide sequence ID" value="NM_178788.5"/>
</dbReference>
<dbReference type="SMR" id="Q8K2D6"/>
<dbReference type="FunCoup" id="Q8K2D6">
    <property type="interactions" value="1090"/>
</dbReference>
<dbReference type="IntAct" id="Q8K2D6">
    <property type="interactions" value="1"/>
</dbReference>
<dbReference type="MINT" id="Q8K2D6"/>
<dbReference type="STRING" id="10090.ENSMUSP00000126733"/>
<dbReference type="PhosphoSitePlus" id="Q8K2D6"/>
<dbReference type="PaxDb" id="10090-ENSMUSP00000126733"/>
<dbReference type="ProteomicsDB" id="279508"/>
<dbReference type="Pumba" id="Q8K2D6"/>
<dbReference type="DNASU" id="320685"/>
<dbReference type="Ensembl" id="ENSMUST00000033966.14">
    <property type="protein sequence ID" value="ENSMUSP00000033966.8"/>
    <property type="gene ID" value="ENSMUSG00000031562.17"/>
</dbReference>
<dbReference type="Ensembl" id="ENSMUST00000170263.10">
    <property type="protein sequence ID" value="ENSMUSP00000126733.4"/>
    <property type="gene ID" value="ENSMUSG00000031562.17"/>
</dbReference>
<dbReference type="Ensembl" id="ENSMUST00000174278.9">
    <property type="protein sequence ID" value="ENSMUSP00000133445.3"/>
    <property type="gene ID" value="ENSMUSG00000031562.17"/>
</dbReference>
<dbReference type="GeneID" id="320685"/>
<dbReference type="KEGG" id="mmu:320685"/>
<dbReference type="UCSC" id="uc012gdt.1">
    <property type="organism name" value="mouse"/>
</dbReference>
<dbReference type="AGR" id="MGI:2444529"/>
<dbReference type="CTD" id="1635"/>
<dbReference type="MGI" id="MGI:2444529">
    <property type="gene designation" value="Dctd"/>
</dbReference>
<dbReference type="eggNOG" id="KOG3127">
    <property type="taxonomic scope" value="Eukaryota"/>
</dbReference>
<dbReference type="GeneTree" id="ENSGT00940000153676"/>
<dbReference type="InParanoid" id="Q8K2D6"/>
<dbReference type="OrthoDB" id="6710946at2759"/>
<dbReference type="PhylomeDB" id="Q8K2D6"/>
<dbReference type="Reactome" id="R-MMU-499943">
    <property type="pathway name" value="Interconversion of nucleotide di- and triphosphates"/>
</dbReference>
<dbReference type="BioGRID-ORCS" id="320685">
    <property type="hits" value="3 hits in 77 CRISPR screens"/>
</dbReference>
<dbReference type="ChiTaRS" id="Dctd">
    <property type="organism name" value="mouse"/>
</dbReference>
<dbReference type="PRO" id="PR:Q8K2D6"/>
<dbReference type="Proteomes" id="UP000000589">
    <property type="component" value="Chromosome 8"/>
</dbReference>
<dbReference type="RNAct" id="Q8K2D6">
    <property type="molecule type" value="protein"/>
</dbReference>
<dbReference type="GO" id="GO:0070694">
    <property type="term" value="F:5-hydroxymethyl-dUMP N-hydrolase activity"/>
    <property type="evidence" value="ECO:0000250"/>
    <property type="project" value="UniProtKB"/>
</dbReference>
<dbReference type="GO" id="GO:0004132">
    <property type="term" value="F:dCMP deaminase activity"/>
    <property type="evidence" value="ECO:0007669"/>
    <property type="project" value="UniProtKB-EC"/>
</dbReference>
<dbReference type="GO" id="GO:0042802">
    <property type="term" value="F:identical protein binding"/>
    <property type="evidence" value="ECO:0007669"/>
    <property type="project" value="Ensembl"/>
</dbReference>
<dbReference type="GO" id="GO:0008270">
    <property type="term" value="F:zinc ion binding"/>
    <property type="evidence" value="ECO:0007669"/>
    <property type="project" value="InterPro"/>
</dbReference>
<dbReference type="GO" id="GO:0043174">
    <property type="term" value="P:nucleoside salvage"/>
    <property type="evidence" value="ECO:0000250"/>
    <property type="project" value="UniProtKB"/>
</dbReference>
<dbReference type="GO" id="GO:0009165">
    <property type="term" value="P:nucleotide biosynthetic process"/>
    <property type="evidence" value="ECO:0007669"/>
    <property type="project" value="UniProtKB-KW"/>
</dbReference>
<dbReference type="GO" id="GO:0006220">
    <property type="term" value="P:pyrimidine nucleotide metabolic process"/>
    <property type="evidence" value="ECO:0007669"/>
    <property type="project" value="InterPro"/>
</dbReference>
<dbReference type="CDD" id="cd01286">
    <property type="entry name" value="deoxycytidylate_deaminase"/>
    <property type="match status" value="1"/>
</dbReference>
<dbReference type="FunFam" id="3.40.140.10:FF:000021">
    <property type="entry name" value="Deoxycytidylate deaminase"/>
    <property type="match status" value="1"/>
</dbReference>
<dbReference type="Gene3D" id="3.40.140.10">
    <property type="entry name" value="Cytidine Deaminase, domain 2"/>
    <property type="match status" value="1"/>
</dbReference>
<dbReference type="InterPro" id="IPR016192">
    <property type="entry name" value="APOBEC/CMP_deaminase_Zn-bd"/>
</dbReference>
<dbReference type="InterPro" id="IPR002125">
    <property type="entry name" value="CMP_dCMP_dom"/>
</dbReference>
<dbReference type="InterPro" id="IPR016193">
    <property type="entry name" value="Cytidine_deaminase-like"/>
</dbReference>
<dbReference type="InterPro" id="IPR016473">
    <property type="entry name" value="dCMP_deaminase"/>
</dbReference>
<dbReference type="InterPro" id="IPR015517">
    <property type="entry name" value="dCMP_deaminase-rel"/>
</dbReference>
<dbReference type="InterPro" id="IPR035105">
    <property type="entry name" value="Deoxycytidylate_deaminase_dom"/>
</dbReference>
<dbReference type="PANTHER" id="PTHR11086:SF18">
    <property type="entry name" value="DEOXYCYTIDYLATE DEAMINASE"/>
    <property type="match status" value="1"/>
</dbReference>
<dbReference type="PANTHER" id="PTHR11086">
    <property type="entry name" value="DEOXYCYTIDYLATE DEAMINASE-RELATED"/>
    <property type="match status" value="1"/>
</dbReference>
<dbReference type="Pfam" id="PF00383">
    <property type="entry name" value="dCMP_cyt_deam_1"/>
    <property type="match status" value="1"/>
</dbReference>
<dbReference type="PIRSF" id="PIRSF006019">
    <property type="entry name" value="dCMP_deaminase"/>
    <property type="match status" value="1"/>
</dbReference>
<dbReference type="SUPFAM" id="SSF53927">
    <property type="entry name" value="Cytidine deaminase-like"/>
    <property type="match status" value="1"/>
</dbReference>
<dbReference type="PROSITE" id="PS00903">
    <property type="entry name" value="CYT_DCMP_DEAMINASES_1"/>
    <property type="match status" value="1"/>
</dbReference>
<dbReference type="PROSITE" id="PS51747">
    <property type="entry name" value="CYT_DCMP_DEAMINASES_2"/>
    <property type="match status" value="1"/>
</dbReference>
<keyword id="KW-0021">Allosteric enzyme</keyword>
<keyword id="KW-0378">Hydrolase</keyword>
<keyword id="KW-0479">Metal-binding</keyword>
<keyword id="KW-0545">Nucleotide biosynthesis</keyword>
<keyword id="KW-0597">Phosphoprotein</keyword>
<keyword id="KW-1185">Reference proteome</keyword>
<keyword id="KW-0862">Zinc</keyword>
<evidence type="ECO:0000250" key="1">
    <source>
        <dbReference type="UniProtKB" id="P32321"/>
    </source>
</evidence>
<evidence type="ECO:0000255" key="2">
    <source>
        <dbReference type="PROSITE-ProRule" id="PRU01083"/>
    </source>
</evidence>
<evidence type="ECO:0000305" key="3"/>
<evidence type="ECO:0000312" key="4">
    <source>
        <dbReference type="MGI" id="MGI:2444529"/>
    </source>
</evidence>
<reference key="1">
    <citation type="journal article" date="2005" name="Science">
        <title>The transcriptional landscape of the mammalian genome.</title>
        <authorList>
            <person name="Carninci P."/>
            <person name="Kasukawa T."/>
            <person name="Katayama S."/>
            <person name="Gough J."/>
            <person name="Frith M.C."/>
            <person name="Maeda N."/>
            <person name="Oyama R."/>
            <person name="Ravasi T."/>
            <person name="Lenhard B."/>
            <person name="Wells C."/>
            <person name="Kodzius R."/>
            <person name="Shimokawa K."/>
            <person name="Bajic V.B."/>
            <person name="Brenner S.E."/>
            <person name="Batalov S."/>
            <person name="Forrest A.R."/>
            <person name="Zavolan M."/>
            <person name="Davis M.J."/>
            <person name="Wilming L.G."/>
            <person name="Aidinis V."/>
            <person name="Allen J.E."/>
            <person name="Ambesi-Impiombato A."/>
            <person name="Apweiler R."/>
            <person name="Aturaliya R.N."/>
            <person name="Bailey T.L."/>
            <person name="Bansal M."/>
            <person name="Baxter L."/>
            <person name="Beisel K.W."/>
            <person name="Bersano T."/>
            <person name="Bono H."/>
            <person name="Chalk A.M."/>
            <person name="Chiu K.P."/>
            <person name="Choudhary V."/>
            <person name="Christoffels A."/>
            <person name="Clutterbuck D.R."/>
            <person name="Crowe M.L."/>
            <person name="Dalla E."/>
            <person name="Dalrymple B.P."/>
            <person name="de Bono B."/>
            <person name="Della Gatta G."/>
            <person name="di Bernardo D."/>
            <person name="Down T."/>
            <person name="Engstrom P."/>
            <person name="Fagiolini M."/>
            <person name="Faulkner G."/>
            <person name="Fletcher C.F."/>
            <person name="Fukushima T."/>
            <person name="Furuno M."/>
            <person name="Futaki S."/>
            <person name="Gariboldi M."/>
            <person name="Georgii-Hemming P."/>
            <person name="Gingeras T.R."/>
            <person name="Gojobori T."/>
            <person name="Green R.E."/>
            <person name="Gustincich S."/>
            <person name="Harbers M."/>
            <person name="Hayashi Y."/>
            <person name="Hensch T.K."/>
            <person name="Hirokawa N."/>
            <person name="Hill D."/>
            <person name="Huminiecki L."/>
            <person name="Iacono M."/>
            <person name="Ikeo K."/>
            <person name="Iwama A."/>
            <person name="Ishikawa T."/>
            <person name="Jakt M."/>
            <person name="Kanapin A."/>
            <person name="Katoh M."/>
            <person name="Kawasawa Y."/>
            <person name="Kelso J."/>
            <person name="Kitamura H."/>
            <person name="Kitano H."/>
            <person name="Kollias G."/>
            <person name="Krishnan S.P."/>
            <person name="Kruger A."/>
            <person name="Kummerfeld S.K."/>
            <person name="Kurochkin I.V."/>
            <person name="Lareau L.F."/>
            <person name="Lazarevic D."/>
            <person name="Lipovich L."/>
            <person name="Liu J."/>
            <person name="Liuni S."/>
            <person name="McWilliam S."/>
            <person name="Madan Babu M."/>
            <person name="Madera M."/>
            <person name="Marchionni L."/>
            <person name="Matsuda H."/>
            <person name="Matsuzawa S."/>
            <person name="Miki H."/>
            <person name="Mignone F."/>
            <person name="Miyake S."/>
            <person name="Morris K."/>
            <person name="Mottagui-Tabar S."/>
            <person name="Mulder N."/>
            <person name="Nakano N."/>
            <person name="Nakauchi H."/>
            <person name="Ng P."/>
            <person name="Nilsson R."/>
            <person name="Nishiguchi S."/>
            <person name="Nishikawa S."/>
            <person name="Nori F."/>
            <person name="Ohara O."/>
            <person name="Okazaki Y."/>
            <person name="Orlando V."/>
            <person name="Pang K.C."/>
            <person name="Pavan W.J."/>
            <person name="Pavesi G."/>
            <person name="Pesole G."/>
            <person name="Petrovsky N."/>
            <person name="Piazza S."/>
            <person name="Reed J."/>
            <person name="Reid J.F."/>
            <person name="Ring B.Z."/>
            <person name="Ringwald M."/>
            <person name="Rost B."/>
            <person name="Ruan Y."/>
            <person name="Salzberg S.L."/>
            <person name="Sandelin A."/>
            <person name="Schneider C."/>
            <person name="Schoenbach C."/>
            <person name="Sekiguchi K."/>
            <person name="Semple C.A."/>
            <person name="Seno S."/>
            <person name="Sessa L."/>
            <person name="Sheng Y."/>
            <person name="Shibata Y."/>
            <person name="Shimada H."/>
            <person name="Shimada K."/>
            <person name="Silva D."/>
            <person name="Sinclair B."/>
            <person name="Sperling S."/>
            <person name="Stupka E."/>
            <person name="Sugiura K."/>
            <person name="Sultana R."/>
            <person name="Takenaka Y."/>
            <person name="Taki K."/>
            <person name="Tammoja K."/>
            <person name="Tan S.L."/>
            <person name="Tang S."/>
            <person name="Taylor M.S."/>
            <person name="Tegner J."/>
            <person name="Teichmann S.A."/>
            <person name="Ueda H.R."/>
            <person name="van Nimwegen E."/>
            <person name="Verardo R."/>
            <person name="Wei C.L."/>
            <person name="Yagi K."/>
            <person name="Yamanishi H."/>
            <person name="Zabarovsky E."/>
            <person name="Zhu S."/>
            <person name="Zimmer A."/>
            <person name="Hide W."/>
            <person name="Bult C."/>
            <person name="Grimmond S.M."/>
            <person name="Teasdale R.D."/>
            <person name="Liu E.T."/>
            <person name="Brusic V."/>
            <person name="Quackenbush J."/>
            <person name="Wahlestedt C."/>
            <person name="Mattick J.S."/>
            <person name="Hume D.A."/>
            <person name="Kai C."/>
            <person name="Sasaki D."/>
            <person name="Tomaru Y."/>
            <person name="Fukuda S."/>
            <person name="Kanamori-Katayama M."/>
            <person name="Suzuki M."/>
            <person name="Aoki J."/>
            <person name="Arakawa T."/>
            <person name="Iida J."/>
            <person name="Imamura K."/>
            <person name="Itoh M."/>
            <person name="Kato T."/>
            <person name="Kawaji H."/>
            <person name="Kawagashira N."/>
            <person name="Kawashima T."/>
            <person name="Kojima M."/>
            <person name="Kondo S."/>
            <person name="Konno H."/>
            <person name="Nakano K."/>
            <person name="Ninomiya N."/>
            <person name="Nishio T."/>
            <person name="Okada M."/>
            <person name="Plessy C."/>
            <person name="Shibata K."/>
            <person name="Shiraki T."/>
            <person name="Suzuki S."/>
            <person name="Tagami M."/>
            <person name="Waki K."/>
            <person name="Watahiki A."/>
            <person name="Okamura-Oho Y."/>
            <person name="Suzuki H."/>
            <person name="Kawai J."/>
            <person name="Hayashizaki Y."/>
        </authorList>
    </citation>
    <scope>NUCLEOTIDE SEQUENCE [LARGE SCALE MRNA]</scope>
    <source>
        <strain>C57BL/6J</strain>
        <tissue>Hypothalamus</tissue>
        <tissue>Testis</tissue>
    </source>
</reference>
<reference key="2">
    <citation type="journal article" date="2004" name="Genome Res.">
        <title>The status, quality, and expansion of the NIH full-length cDNA project: the Mammalian Gene Collection (MGC).</title>
        <authorList>
            <consortium name="The MGC Project Team"/>
        </authorList>
    </citation>
    <scope>NUCLEOTIDE SEQUENCE [LARGE SCALE MRNA]</scope>
    <source>
        <strain>FVB/N</strain>
        <tissue>Mammary tumor</tissue>
    </source>
</reference>
<proteinExistence type="evidence at transcript level"/>
<protein>
    <recommendedName>
        <fullName evidence="1">Deoxycytidylate deaminase</fullName>
        <ecNumber evidence="1">3.5.4.12</ecNumber>
    </recommendedName>
    <alternativeName>
        <fullName evidence="1">dCMP deaminase</fullName>
    </alternativeName>
</protein>
<gene>
    <name evidence="4" type="primary">Dctd</name>
</gene>
<organism>
    <name type="scientific">Mus musculus</name>
    <name type="common">Mouse</name>
    <dbReference type="NCBI Taxonomy" id="10090"/>
    <lineage>
        <taxon>Eukaryota</taxon>
        <taxon>Metazoa</taxon>
        <taxon>Chordata</taxon>
        <taxon>Craniata</taxon>
        <taxon>Vertebrata</taxon>
        <taxon>Euteleostomi</taxon>
        <taxon>Mammalia</taxon>
        <taxon>Eutheria</taxon>
        <taxon>Euarchontoglires</taxon>
        <taxon>Glires</taxon>
        <taxon>Rodentia</taxon>
        <taxon>Myomorpha</taxon>
        <taxon>Muroidea</taxon>
        <taxon>Muridae</taxon>
        <taxon>Murinae</taxon>
        <taxon>Mus</taxon>
        <taxon>Mus</taxon>
    </lineage>
</organism>
<comment type="function">
    <text evidence="1">Catalyzes the deamination of dCMP to dUMP, providing the nucleoside monophosphate substrate for the thymidylate synthase/TYMS. Also, part of a nucleotide salvage pathway that eliminates epigenetically modified 5-hydroxymethyl-dCMP (hmdCMP) in a two-step process entailing deamination to cytotoxic 5-hydroxymethyl-dUMP (hmdUMP), followed by its hydrolysis into 5-hydroxymethyluracil (hmU) and 2-deoxy-D-ribose 5-phosphate (deoxyribosephosphate). Catalyzes the first step in that pathway, the deamination of 5-hydroxymethyl-dCMP (hmdCMP).</text>
</comment>
<comment type="catalytic activity">
    <reaction evidence="1">
        <text>dCMP + H2O + H(+) = dUMP + NH4(+)</text>
        <dbReference type="Rhea" id="RHEA:22924"/>
        <dbReference type="ChEBI" id="CHEBI:15377"/>
        <dbReference type="ChEBI" id="CHEBI:15378"/>
        <dbReference type="ChEBI" id="CHEBI:28938"/>
        <dbReference type="ChEBI" id="CHEBI:57566"/>
        <dbReference type="ChEBI" id="CHEBI:246422"/>
        <dbReference type="EC" id="3.5.4.12"/>
    </reaction>
    <physiologicalReaction direction="left-to-right" evidence="1">
        <dbReference type="Rhea" id="RHEA:22925"/>
    </physiologicalReaction>
</comment>
<comment type="catalytic activity">
    <reaction evidence="1">
        <text>5-hydroxymethyl-dCMP + H2O + H(+) = 5-hydroxymethyl-dUMP + NH4(+)</text>
        <dbReference type="Rhea" id="RHEA:77175"/>
        <dbReference type="ChEBI" id="CHEBI:15377"/>
        <dbReference type="ChEBI" id="CHEBI:15378"/>
        <dbReference type="ChEBI" id="CHEBI:28938"/>
        <dbReference type="ChEBI" id="CHEBI:57962"/>
        <dbReference type="ChEBI" id="CHEBI:90409"/>
    </reaction>
    <physiologicalReaction direction="left-to-right" evidence="1">
        <dbReference type="Rhea" id="RHEA:77176"/>
    </physiologicalReaction>
</comment>
<comment type="cofactor">
    <cofactor evidence="1">
        <name>Zn(2+)</name>
        <dbReference type="ChEBI" id="CHEBI:29105"/>
    </cofactor>
</comment>
<comment type="activity regulation">
    <text evidence="1">Allosteric enzyme whose activity is greatly influenced by the end products of its metabolic pathway, dCTP and dTTP.</text>
</comment>
<comment type="subunit">
    <text evidence="1">Homohexamer.</text>
</comment>
<comment type="similarity">
    <text evidence="3">Belongs to the cytidine and deoxycytidylate deaminase family.</text>
</comment>